<reference key="1">
    <citation type="journal article" date="2007" name="Nature">
        <title>Evolution of genes and genomes on the Drosophila phylogeny.</title>
        <authorList>
            <consortium name="Drosophila 12 genomes consortium"/>
        </authorList>
    </citation>
    <scope>NUCLEOTIDE SEQUENCE [LARGE SCALE GENOMIC DNA]</scope>
    <source>
        <strain>Rob3c / Tucson 14021-0248.25</strain>
    </source>
</reference>
<dbReference type="EMBL" id="CH480826">
    <property type="protein sequence ID" value="EDW44231.1"/>
    <property type="molecule type" value="Genomic_DNA"/>
</dbReference>
<dbReference type="SMR" id="B4IAB8"/>
<dbReference type="STRING" id="7238.B4IAB8"/>
<dbReference type="EnsemblMetazoa" id="FBtr0205282">
    <property type="protein sequence ID" value="FBpp0203774"/>
    <property type="gene ID" value="FBgn0177167"/>
</dbReference>
<dbReference type="EnsemblMetazoa" id="XM_002040642.2">
    <property type="protein sequence ID" value="XP_002040678.1"/>
    <property type="gene ID" value="LOC6616318"/>
</dbReference>
<dbReference type="GeneID" id="6616318"/>
<dbReference type="KEGG" id="dse:6616318"/>
<dbReference type="HOGENOM" id="CLU_143588_2_0_1"/>
<dbReference type="OMA" id="PYFRGNE"/>
<dbReference type="OrthoDB" id="30195at7215"/>
<dbReference type="PhylomeDB" id="B4IAB8"/>
<dbReference type="Proteomes" id="UP000001292">
    <property type="component" value="Unassembled WGS sequence"/>
</dbReference>
<dbReference type="GO" id="GO:0005789">
    <property type="term" value="C:endoplasmic reticulum membrane"/>
    <property type="evidence" value="ECO:0007669"/>
    <property type="project" value="UniProtKB-SubCell"/>
</dbReference>
<dbReference type="GO" id="GO:0033116">
    <property type="term" value="C:endoplasmic reticulum-Golgi intermediate compartment membrane"/>
    <property type="evidence" value="ECO:0007669"/>
    <property type="project" value="UniProtKB-SubCell"/>
</dbReference>
<dbReference type="GO" id="GO:0012507">
    <property type="term" value="C:ER to Golgi transport vesicle membrane"/>
    <property type="evidence" value="ECO:0007669"/>
    <property type="project" value="UniProtKB-SubCell"/>
</dbReference>
<dbReference type="GO" id="GO:0070072">
    <property type="term" value="P:vacuolar proton-transporting V-type ATPase complex assembly"/>
    <property type="evidence" value="ECO:0007669"/>
    <property type="project" value="UniProtKB-UniRule"/>
</dbReference>
<dbReference type="HAMAP" id="MF_03058">
    <property type="entry name" value="VMA21"/>
    <property type="match status" value="1"/>
</dbReference>
<dbReference type="InterPro" id="IPR019013">
    <property type="entry name" value="Vma21"/>
</dbReference>
<dbReference type="Pfam" id="PF09446">
    <property type="entry name" value="VMA21"/>
    <property type="match status" value="1"/>
</dbReference>
<gene>
    <name type="ORF">GM22297</name>
</gene>
<accession>B4IAB8</accession>
<name>VMA21_DROSE</name>
<evidence type="ECO:0000255" key="1">
    <source>
        <dbReference type="HAMAP-Rule" id="MF_03058"/>
    </source>
</evidence>
<evidence type="ECO:0000256" key="2">
    <source>
        <dbReference type="SAM" id="MobiDB-lite"/>
    </source>
</evidence>
<feature type="chain" id="PRO_0000377574" description="Vacuolar ATPase assembly integral membrane protein VMA21 homolog">
    <location>
        <begin position="1"/>
        <end position="105"/>
    </location>
</feature>
<feature type="topological domain" description="Cytoplasmic" evidence="1">
    <location>
        <begin position="1"/>
        <end position="36"/>
    </location>
</feature>
<feature type="transmembrane region" description="Helical" evidence="1">
    <location>
        <begin position="37"/>
        <end position="57"/>
    </location>
</feature>
<feature type="topological domain" description="Lumenal" evidence="1">
    <location>
        <begin position="58"/>
        <end position="68"/>
    </location>
</feature>
<feature type="transmembrane region" description="Helical" evidence="1">
    <location>
        <begin position="69"/>
        <end position="89"/>
    </location>
</feature>
<feature type="topological domain" description="Cytoplasmic" evidence="1">
    <location>
        <begin position="90"/>
        <end position="105"/>
    </location>
</feature>
<feature type="region of interest" description="Disordered" evidence="2">
    <location>
        <begin position="1"/>
        <end position="26"/>
    </location>
</feature>
<organism>
    <name type="scientific">Drosophila sechellia</name>
    <name type="common">Fruit fly</name>
    <dbReference type="NCBI Taxonomy" id="7238"/>
    <lineage>
        <taxon>Eukaryota</taxon>
        <taxon>Metazoa</taxon>
        <taxon>Ecdysozoa</taxon>
        <taxon>Arthropoda</taxon>
        <taxon>Hexapoda</taxon>
        <taxon>Insecta</taxon>
        <taxon>Pterygota</taxon>
        <taxon>Neoptera</taxon>
        <taxon>Endopterygota</taxon>
        <taxon>Diptera</taxon>
        <taxon>Brachycera</taxon>
        <taxon>Muscomorpha</taxon>
        <taxon>Ephydroidea</taxon>
        <taxon>Drosophilidae</taxon>
        <taxon>Drosophila</taxon>
        <taxon>Sophophora</taxon>
    </lineage>
</organism>
<comment type="function">
    <text evidence="1">Required for the assembly of the V0 complex of the vacuolar ATPase (V-ATPase) in the endoplasmic reticulum.</text>
</comment>
<comment type="subcellular location">
    <subcellularLocation>
        <location evidence="1">Endoplasmic reticulum membrane</location>
        <topology evidence="1">Multi-pass membrane protein</topology>
    </subcellularLocation>
    <subcellularLocation>
        <location evidence="1">Endoplasmic reticulum-Golgi intermediate compartment membrane</location>
        <topology evidence="1">Multi-pass membrane protein</topology>
    </subcellularLocation>
    <subcellularLocation>
        <location evidence="1">Cytoplasmic vesicle</location>
        <location evidence="1">COPII-coated vesicle membrane</location>
        <topology evidence="1">Multi-pass membrane protein</topology>
    </subcellularLocation>
</comment>
<comment type="similarity">
    <text evidence="1">Belongs to the VMA21 family.</text>
</comment>
<sequence length="105" mass="11354">MSTKNKKAAGGNGGAPKQTRQQSHDSQDYSSFKTVLFYCMLIVFLPVLTFFVLKGFVLDQFLNISEVKVNIASAVGAVVALHIALGLYIYRAYFGAPGSKGSKTD</sequence>
<proteinExistence type="inferred from homology"/>
<keyword id="KW-0968">Cytoplasmic vesicle</keyword>
<keyword id="KW-0256">Endoplasmic reticulum</keyword>
<keyword id="KW-0472">Membrane</keyword>
<keyword id="KW-1185">Reference proteome</keyword>
<keyword id="KW-0812">Transmembrane</keyword>
<keyword id="KW-1133">Transmembrane helix</keyword>
<protein>
    <recommendedName>
        <fullName evidence="1">Vacuolar ATPase assembly integral membrane protein VMA21 homolog</fullName>
    </recommendedName>
</protein>